<sequence>MSELKIKAAKAAIAYIEDDMVIGVGTGSTVNFFIKELAAIKHKIEACVASSKATEALLRAEGIPVIDLNSVQDLPIYVDGADEVNERGEMIKGGGGALTREKIVANVATQFICIVDESKVVKRLGEFPVAVEVIPMARSFVARQIVKLGGDPEYREGFVTDNGNIILDVFNLSFSTPMALEDSLNVIPGVVENGVFAKRLADKVLVASASGVNNLK</sequence>
<proteinExistence type="evidence at protein level"/>
<dbReference type="EC" id="5.3.1.6" evidence="1"/>
<dbReference type="EMBL" id="AE017354">
    <property type="protein sequence ID" value="AAU26201.1"/>
    <property type="molecule type" value="Genomic_DNA"/>
</dbReference>
<dbReference type="RefSeq" id="WP_010945855.1">
    <property type="nucleotide sequence ID" value="NC_002942.5"/>
</dbReference>
<dbReference type="RefSeq" id="YP_094148.1">
    <property type="nucleotide sequence ID" value="NC_002942.5"/>
</dbReference>
<dbReference type="PDB" id="6EEP">
    <property type="method" value="X-ray"/>
    <property type="resolution" value="1.85 A"/>
    <property type="chains" value="A/B=1-216"/>
</dbReference>
<dbReference type="PDB" id="6MC0">
    <property type="method" value="X-ray"/>
    <property type="resolution" value="2.00 A"/>
    <property type="chains" value="A/B=1-216"/>
</dbReference>
<dbReference type="PDBsum" id="6EEP"/>
<dbReference type="PDBsum" id="6MC0"/>
<dbReference type="SMR" id="Q5ZZB7"/>
<dbReference type="STRING" id="272624.lpg0094"/>
<dbReference type="PaxDb" id="272624-lpg0094"/>
<dbReference type="GeneID" id="57034102"/>
<dbReference type="KEGG" id="lpn:lpg0094"/>
<dbReference type="PATRIC" id="fig|272624.6.peg.100"/>
<dbReference type="eggNOG" id="COG0120">
    <property type="taxonomic scope" value="Bacteria"/>
</dbReference>
<dbReference type="HOGENOM" id="CLU_056590_1_1_6"/>
<dbReference type="OrthoDB" id="5870696at2"/>
<dbReference type="UniPathway" id="UPA00115">
    <property type="reaction ID" value="UER00412"/>
</dbReference>
<dbReference type="Proteomes" id="UP000000609">
    <property type="component" value="Chromosome"/>
</dbReference>
<dbReference type="GO" id="GO:0005829">
    <property type="term" value="C:cytosol"/>
    <property type="evidence" value="ECO:0007669"/>
    <property type="project" value="TreeGrafter"/>
</dbReference>
<dbReference type="GO" id="GO:0004751">
    <property type="term" value="F:ribose-5-phosphate isomerase activity"/>
    <property type="evidence" value="ECO:0007669"/>
    <property type="project" value="UniProtKB-UniRule"/>
</dbReference>
<dbReference type="GO" id="GO:0006014">
    <property type="term" value="P:D-ribose metabolic process"/>
    <property type="evidence" value="ECO:0007669"/>
    <property type="project" value="TreeGrafter"/>
</dbReference>
<dbReference type="GO" id="GO:0009052">
    <property type="term" value="P:pentose-phosphate shunt, non-oxidative branch"/>
    <property type="evidence" value="ECO:0007669"/>
    <property type="project" value="UniProtKB-UniRule"/>
</dbReference>
<dbReference type="CDD" id="cd01398">
    <property type="entry name" value="RPI_A"/>
    <property type="match status" value="1"/>
</dbReference>
<dbReference type="FunFam" id="3.30.70.260:FF:000004">
    <property type="entry name" value="Ribose-5-phosphate isomerase A"/>
    <property type="match status" value="1"/>
</dbReference>
<dbReference type="FunFam" id="3.40.50.1360:FF:000001">
    <property type="entry name" value="Ribose-5-phosphate isomerase A"/>
    <property type="match status" value="1"/>
</dbReference>
<dbReference type="Gene3D" id="3.30.70.260">
    <property type="match status" value="1"/>
</dbReference>
<dbReference type="Gene3D" id="3.40.50.1360">
    <property type="match status" value="1"/>
</dbReference>
<dbReference type="HAMAP" id="MF_00170">
    <property type="entry name" value="Rib_5P_isom_A"/>
    <property type="match status" value="1"/>
</dbReference>
<dbReference type="InterPro" id="IPR037171">
    <property type="entry name" value="NagB/RpiA_transferase-like"/>
</dbReference>
<dbReference type="InterPro" id="IPR020672">
    <property type="entry name" value="Ribose5P_isomerase_typA_subgr"/>
</dbReference>
<dbReference type="InterPro" id="IPR004788">
    <property type="entry name" value="Ribose5P_isomerase_type_A"/>
</dbReference>
<dbReference type="NCBIfam" id="NF001924">
    <property type="entry name" value="PRK00702.1"/>
    <property type="match status" value="1"/>
</dbReference>
<dbReference type="NCBIfam" id="TIGR00021">
    <property type="entry name" value="rpiA"/>
    <property type="match status" value="1"/>
</dbReference>
<dbReference type="PANTHER" id="PTHR11934">
    <property type="entry name" value="RIBOSE-5-PHOSPHATE ISOMERASE"/>
    <property type="match status" value="1"/>
</dbReference>
<dbReference type="PANTHER" id="PTHR11934:SF0">
    <property type="entry name" value="RIBOSE-5-PHOSPHATE ISOMERASE"/>
    <property type="match status" value="1"/>
</dbReference>
<dbReference type="Pfam" id="PF06026">
    <property type="entry name" value="Rib_5-P_isom_A"/>
    <property type="match status" value="1"/>
</dbReference>
<dbReference type="SUPFAM" id="SSF75445">
    <property type="entry name" value="D-ribose-5-phosphate isomerase (RpiA), lid domain"/>
    <property type="match status" value="1"/>
</dbReference>
<dbReference type="SUPFAM" id="SSF100950">
    <property type="entry name" value="NagB/RpiA/CoA transferase-like"/>
    <property type="match status" value="1"/>
</dbReference>
<reference key="1">
    <citation type="journal article" date="2004" name="Science">
        <title>The genomic sequence of the accidental pathogen Legionella pneumophila.</title>
        <authorList>
            <person name="Chien M."/>
            <person name="Morozova I."/>
            <person name="Shi S."/>
            <person name="Sheng H."/>
            <person name="Chen J."/>
            <person name="Gomez S.M."/>
            <person name="Asamani G."/>
            <person name="Hill K."/>
            <person name="Nuara J."/>
            <person name="Feder M."/>
            <person name="Rineer J."/>
            <person name="Greenberg J.J."/>
            <person name="Steshenko V."/>
            <person name="Park S.H."/>
            <person name="Zhao B."/>
            <person name="Teplitskaya E."/>
            <person name="Edwards J.R."/>
            <person name="Pampou S."/>
            <person name="Georghiou A."/>
            <person name="Chou I.-C."/>
            <person name="Iannuccilli W."/>
            <person name="Ulz M.E."/>
            <person name="Kim D.H."/>
            <person name="Geringer-Sameth A."/>
            <person name="Goldsberry C."/>
            <person name="Morozov P."/>
            <person name="Fischer S.G."/>
            <person name="Segal G."/>
            <person name="Qu X."/>
            <person name="Rzhetsky A."/>
            <person name="Zhang P."/>
            <person name="Cayanis E."/>
            <person name="De Jong P.J."/>
            <person name="Ju J."/>
            <person name="Kalachikov S."/>
            <person name="Shuman H.A."/>
            <person name="Russo J.J."/>
        </authorList>
    </citation>
    <scope>NUCLEOTIDE SEQUENCE [LARGE SCALE GENOMIC DNA]</scope>
    <source>
        <strain>Philadelphia 1 / ATCC 33152 / DSM 7513</strain>
    </source>
</reference>
<name>RPIA_LEGPH</name>
<feature type="chain" id="PRO_0000158430" description="Ribose-5-phosphate isomerase A">
    <location>
        <begin position="1"/>
        <end position="216"/>
    </location>
</feature>
<feature type="active site" description="Proton acceptor" evidence="1">
    <location>
        <position position="101"/>
    </location>
</feature>
<feature type="binding site" evidence="1">
    <location>
        <begin position="26"/>
        <end position="29"/>
    </location>
    <ligand>
        <name>substrate</name>
    </ligand>
</feature>
<feature type="binding site" evidence="1">
    <location>
        <begin position="79"/>
        <end position="82"/>
    </location>
    <ligand>
        <name>substrate</name>
    </ligand>
</feature>
<feature type="binding site" evidence="1">
    <location>
        <begin position="92"/>
        <end position="95"/>
    </location>
    <ligand>
        <name>substrate</name>
    </ligand>
</feature>
<feature type="binding site" evidence="1">
    <location>
        <position position="119"/>
    </location>
    <ligand>
        <name>substrate</name>
    </ligand>
</feature>
<feature type="helix" evidence="2">
    <location>
        <begin position="1"/>
        <end position="13"/>
    </location>
</feature>
<feature type="strand" evidence="2">
    <location>
        <begin position="20"/>
        <end position="24"/>
    </location>
</feature>
<feature type="helix" evidence="2">
    <location>
        <begin position="28"/>
        <end position="39"/>
    </location>
</feature>
<feature type="helix" evidence="2">
    <location>
        <begin position="40"/>
        <end position="43"/>
    </location>
</feature>
<feature type="strand" evidence="2">
    <location>
        <begin position="44"/>
        <end position="51"/>
    </location>
</feature>
<feature type="helix" evidence="2">
    <location>
        <begin position="52"/>
        <end position="60"/>
    </location>
</feature>
<feature type="helix" evidence="2">
    <location>
        <begin position="68"/>
        <end position="70"/>
    </location>
</feature>
<feature type="strand" evidence="2">
    <location>
        <begin position="76"/>
        <end position="79"/>
    </location>
</feature>
<feature type="strand" evidence="2">
    <location>
        <begin position="82"/>
        <end position="84"/>
    </location>
</feature>
<feature type="helix" evidence="2">
    <location>
        <begin position="98"/>
        <end position="107"/>
    </location>
</feature>
<feature type="strand" evidence="2">
    <location>
        <begin position="109"/>
        <end position="116"/>
    </location>
</feature>
<feature type="helix" evidence="2">
    <location>
        <begin position="117"/>
        <end position="119"/>
    </location>
</feature>
<feature type="strand" evidence="2">
    <location>
        <begin position="122"/>
        <end position="124"/>
    </location>
</feature>
<feature type="strand" evidence="2">
    <location>
        <begin position="129"/>
        <end position="133"/>
    </location>
</feature>
<feature type="helix" evidence="2">
    <location>
        <begin position="135"/>
        <end position="137"/>
    </location>
</feature>
<feature type="helix" evidence="2">
    <location>
        <begin position="138"/>
        <end position="147"/>
    </location>
</feature>
<feature type="strand" evidence="2">
    <location>
        <begin position="151"/>
        <end position="154"/>
    </location>
</feature>
<feature type="strand" evidence="2">
    <location>
        <begin position="165"/>
        <end position="171"/>
    </location>
</feature>
<feature type="helix" evidence="2">
    <location>
        <begin position="177"/>
        <end position="185"/>
    </location>
</feature>
<feature type="strand" evidence="2">
    <location>
        <begin position="190"/>
        <end position="199"/>
    </location>
</feature>
<feature type="strand" evidence="2">
    <location>
        <begin position="202"/>
        <end position="207"/>
    </location>
</feature>
<feature type="strand" evidence="2">
    <location>
        <begin position="212"/>
        <end position="216"/>
    </location>
</feature>
<accession>Q5ZZB7</accession>
<keyword id="KW-0002">3D-structure</keyword>
<keyword id="KW-0413">Isomerase</keyword>
<keyword id="KW-1185">Reference proteome</keyword>
<organism>
    <name type="scientific">Legionella pneumophila subsp. pneumophila (strain Philadelphia 1 / ATCC 33152 / DSM 7513)</name>
    <dbReference type="NCBI Taxonomy" id="272624"/>
    <lineage>
        <taxon>Bacteria</taxon>
        <taxon>Pseudomonadati</taxon>
        <taxon>Pseudomonadota</taxon>
        <taxon>Gammaproteobacteria</taxon>
        <taxon>Legionellales</taxon>
        <taxon>Legionellaceae</taxon>
        <taxon>Legionella</taxon>
    </lineage>
</organism>
<evidence type="ECO:0000255" key="1">
    <source>
        <dbReference type="HAMAP-Rule" id="MF_00170"/>
    </source>
</evidence>
<evidence type="ECO:0007829" key="2">
    <source>
        <dbReference type="PDB" id="6EEP"/>
    </source>
</evidence>
<protein>
    <recommendedName>
        <fullName evidence="1">Ribose-5-phosphate isomerase A</fullName>
        <ecNumber evidence="1">5.3.1.6</ecNumber>
    </recommendedName>
    <alternativeName>
        <fullName evidence="1">Phosphoriboisomerase A</fullName>
        <shortName evidence="1">PRI</shortName>
    </alternativeName>
</protein>
<comment type="function">
    <text evidence="1">Catalyzes the reversible conversion of ribose-5-phosphate to ribulose 5-phosphate.</text>
</comment>
<comment type="catalytic activity">
    <reaction evidence="1">
        <text>aldehydo-D-ribose 5-phosphate = D-ribulose 5-phosphate</text>
        <dbReference type="Rhea" id="RHEA:14657"/>
        <dbReference type="ChEBI" id="CHEBI:58121"/>
        <dbReference type="ChEBI" id="CHEBI:58273"/>
        <dbReference type="EC" id="5.3.1.6"/>
    </reaction>
</comment>
<comment type="pathway">
    <text evidence="1">Carbohydrate degradation; pentose phosphate pathway; D-ribose 5-phosphate from D-ribulose 5-phosphate (non-oxidative stage): step 1/1.</text>
</comment>
<comment type="subunit">
    <text evidence="1">Homodimer.</text>
</comment>
<comment type="similarity">
    <text evidence="1">Belongs to the ribose 5-phosphate isomerase family.</text>
</comment>
<gene>
    <name evidence="1" type="primary">rpiA</name>
    <name type="ordered locus">lpg0094</name>
</gene>